<organism>
    <name type="scientific">Arabidopsis thaliana</name>
    <name type="common">Mouse-ear cress</name>
    <dbReference type="NCBI Taxonomy" id="3702"/>
    <lineage>
        <taxon>Eukaryota</taxon>
        <taxon>Viridiplantae</taxon>
        <taxon>Streptophyta</taxon>
        <taxon>Embryophyta</taxon>
        <taxon>Tracheophyta</taxon>
        <taxon>Spermatophyta</taxon>
        <taxon>Magnoliopsida</taxon>
        <taxon>eudicotyledons</taxon>
        <taxon>Gunneridae</taxon>
        <taxon>Pentapetalae</taxon>
        <taxon>rosids</taxon>
        <taxon>malvids</taxon>
        <taxon>Brassicales</taxon>
        <taxon>Brassicaceae</taxon>
        <taxon>Camelineae</taxon>
        <taxon>Arabidopsis</taxon>
    </lineage>
</organism>
<keyword id="KW-0156">Chromatin regulator</keyword>
<keyword id="KW-0489">Methyltransferase</keyword>
<keyword id="KW-0539">Nucleus</keyword>
<keyword id="KW-1185">Reference proteome</keyword>
<keyword id="KW-0949">S-adenosyl-L-methionine</keyword>
<keyword id="KW-0732">Signal</keyword>
<keyword id="KW-0808">Transferase</keyword>
<sequence>MSRLALNRYSRCFSRLKTLTTPLFFSSSAASNRDGDYQIGPPPIRVGLTESAGRAVFATRKIGAGDLIHTAKPVVACPSLLKLDSVCYLCLKKLMGSAKFEDRGVSYCSQECQENSKGFLDVETRADWSSFDDYCRTHNFKYPLMVKRLCCMIISGARPADCLDILQPAVLSSEMISKIEDGYGLLWNAFRKANFKDDDVAFLTKQWYTAILARIRINAFRIDLVGGSCGEDLLSLAAASVEGEGAVGHAVYMLPSFYNHDCDPNAHIIWLHNADARLNTLRDVEEGEELRICYIDASMGYEARQTILSQGFGFLCNCLRCQSTD</sequence>
<gene>
    <name type="primary">ATXR4</name>
    <name type="synonym">SDG38</name>
    <name type="synonym">SET38</name>
    <name type="ordered locus">At5g06620</name>
    <name type="ORF">F15M7.15</name>
</gene>
<accession>Q9FG08</accession>
<protein>
    <recommendedName>
        <fullName>Histone-lysine N-methyltransferase ATXR4</fullName>
        <ecNumber>2.1.1.-</ecNumber>
    </recommendedName>
    <alternativeName>
        <fullName>Protein SET DOMAIN GROUP 38</fullName>
    </alternativeName>
    <alternativeName>
        <fullName>Trithorax-related protein 4</fullName>
        <shortName>TRX-related protein 4</shortName>
    </alternativeName>
</protein>
<comment type="function">
    <text evidence="1">Histone methyltransferase.</text>
</comment>
<comment type="catalytic activity">
    <reaction>
        <text>L-lysyl-[histone] + S-adenosyl-L-methionine = N(6)-methyl-L-lysyl-[histone] + S-adenosyl-L-homocysteine + H(+)</text>
        <dbReference type="Rhea" id="RHEA:10024"/>
        <dbReference type="Rhea" id="RHEA-COMP:9845"/>
        <dbReference type="Rhea" id="RHEA-COMP:9846"/>
        <dbReference type="ChEBI" id="CHEBI:15378"/>
        <dbReference type="ChEBI" id="CHEBI:29969"/>
        <dbReference type="ChEBI" id="CHEBI:57856"/>
        <dbReference type="ChEBI" id="CHEBI:59789"/>
        <dbReference type="ChEBI" id="CHEBI:61929"/>
    </reaction>
</comment>
<comment type="subcellular location">
    <subcellularLocation>
        <location evidence="1">Nucleus</location>
    </subcellularLocation>
</comment>
<comment type="similarity">
    <text evidence="3">Belongs to the class V-like SAM-binding methyltransferase superfamily. Histone-lysine methyltransferase family. TRX/MLL subfamily.</text>
</comment>
<comment type="sequence caution" evidence="4">
    <conflict type="erroneous gene model prediction">
        <sequence resource="EMBL-CDS" id="BAB11411"/>
    </conflict>
</comment>
<dbReference type="EC" id="2.1.1.-"/>
<dbReference type="EMBL" id="AP002543">
    <property type="protein sequence ID" value="BAB11411.1"/>
    <property type="status" value="ALT_SEQ"/>
    <property type="molecule type" value="Genomic_DNA"/>
</dbReference>
<dbReference type="EMBL" id="CP002688">
    <property type="protein sequence ID" value="AED91043.1"/>
    <property type="molecule type" value="Genomic_DNA"/>
</dbReference>
<dbReference type="RefSeq" id="NP_196280.2">
    <property type="nucleotide sequence ID" value="NM_120745.3"/>
</dbReference>
<dbReference type="SMR" id="Q9FG08"/>
<dbReference type="BioGRID" id="15829">
    <property type="interactions" value="1"/>
</dbReference>
<dbReference type="FunCoup" id="Q9FG08">
    <property type="interactions" value="64"/>
</dbReference>
<dbReference type="STRING" id="3702.Q9FG08"/>
<dbReference type="PaxDb" id="3702-AT5G06620.1"/>
<dbReference type="ProteomicsDB" id="241151"/>
<dbReference type="EnsemblPlants" id="AT5G06620.1">
    <property type="protein sequence ID" value="AT5G06620.1"/>
    <property type="gene ID" value="AT5G06620"/>
</dbReference>
<dbReference type="GeneID" id="830550"/>
<dbReference type="Gramene" id="AT5G06620.1">
    <property type="protein sequence ID" value="AT5G06620.1"/>
    <property type="gene ID" value="AT5G06620"/>
</dbReference>
<dbReference type="KEGG" id="ath:AT5G06620"/>
<dbReference type="Araport" id="AT5G06620"/>
<dbReference type="TAIR" id="AT5G06620">
    <property type="gene designation" value="SDG38"/>
</dbReference>
<dbReference type="eggNOG" id="KOG2084">
    <property type="taxonomic scope" value="Eukaryota"/>
</dbReference>
<dbReference type="HOGENOM" id="CLU_058310_0_0_1"/>
<dbReference type="InParanoid" id="Q9FG08"/>
<dbReference type="OMA" id="YIDASMN"/>
<dbReference type="PhylomeDB" id="Q9FG08"/>
<dbReference type="PRO" id="PR:Q9FG08"/>
<dbReference type="Proteomes" id="UP000006548">
    <property type="component" value="Chromosome 5"/>
</dbReference>
<dbReference type="ExpressionAtlas" id="Q9FG08">
    <property type="expression patterns" value="baseline and differential"/>
</dbReference>
<dbReference type="GO" id="GO:0005634">
    <property type="term" value="C:nucleus"/>
    <property type="evidence" value="ECO:0007669"/>
    <property type="project" value="UniProtKB-SubCell"/>
</dbReference>
<dbReference type="GO" id="GO:0042054">
    <property type="term" value="F:histone methyltransferase activity"/>
    <property type="evidence" value="ECO:0007669"/>
    <property type="project" value="RHEA"/>
</dbReference>
<dbReference type="GO" id="GO:0032259">
    <property type="term" value="P:methylation"/>
    <property type="evidence" value="ECO:0007669"/>
    <property type="project" value="UniProtKB-KW"/>
</dbReference>
<dbReference type="CDD" id="cd20071">
    <property type="entry name" value="SET_SMYD"/>
    <property type="match status" value="1"/>
</dbReference>
<dbReference type="Gene3D" id="1.10.220.160">
    <property type="match status" value="1"/>
</dbReference>
<dbReference type="Gene3D" id="6.10.140.2220">
    <property type="match status" value="1"/>
</dbReference>
<dbReference type="Gene3D" id="2.170.270.10">
    <property type="entry name" value="SET domain"/>
    <property type="match status" value="1"/>
</dbReference>
<dbReference type="InterPro" id="IPR050869">
    <property type="entry name" value="H3K4_H4K5_MeTrfase"/>
</dbReference>
<dbReference type="InterPro" id="IPR001214">
    <property type="entry name" value="SET_dom"/>
</dbReference>
<dbReference type="InterPro" id="IPR046341">
    <property type="entry name" value="SET_dom_sf"/>
</dbReference>
<dbReference type="PANTHER" id="PTHR12197:SF298">
    <property type="entry name" value="HISTONE-LYSINE N-METHYLTRANSFERASE ATXR4"/>
    <property type="match status" value="1"/>
</dbReference>
<dbReference type="PANTHER" id="PTHR12197">
    <property type="entry name" value="HISTONE-LYSINE N-METHYLTRANSFERASE SMYD"/>
    <property type="match status" value="1"/>
</dbReference>
<dbReference type="Pfam" id="PF00856">
    <property type="entry name" value="SET"/>
    <property type="match status" value="1"/>
</dbReference>
<dbReference type="SMART" id="SM00317">
    <property type="entry name" value="SET"/>
    <property type="match status" value="1"/>
</dbReference>
<dbReference type="SUPFAM" id="SSF82199">
    <property type="entry name" value="SET domain"/>
    <property type="match status" value="1"/>
</dbReference>
<dbReference type="PROSITE" id="PS50280">
    <property type="entry name" value="SET"/>
    <property type="match status" value="1"/>
</dbReference>
<feature type="signal peptide" evidence="2">
    <location>
        <begin position="1"/>
        <end position="30"/>
    </location>
</feature>
<feature type="chain" id="PRO_0000233361" description="Histone-lysine N-methyltransferase ATXR4">
    <location>
        <begin position="31"/>
        <end position="325"/>
    </location>
</feature>
<feature type="domain" description="SET" evidence="3">
    <location>
        <begin position="42"/>
        <end position="295"/>
    </location>
</feature>
<name>ATXR4_ARATH</name>
<proteinExistence type="evidence at transcript level"/>
<reference key="1">
    <citation type="submission" date="2000-06" db="EMBL/GenBank/DDBJ databases">
        <title>Structural analysis of Arabidopsis thaliana chromosome 5. XI.</title>
        <authorList>
            <person name="Kaneko T."/>
            <person name="Katoh T."/>
            <person name="Asamizu E."/>
            <person name="Sato S."/>
            <person name="Nakamura Y."/>
            <person name="Kotani H."/>
            <person name="Tabata S."/>
        </authorList>
    </citation>
    <scope>NUCLEOTIDE SEQUENCE [LARGE SCALE GENOMIC DNA]</scope>
    <source>
        <strain>cv. Columbia</strain>
    </source>
</reference>
<reference key="2">
    <citation type="journal article" date="2017" name="Plant J.">
        <title>Araport11: a complete reannotation of the Arabidopsis thaliana reference genome.</title>
        <authorList>
            <person name="Cheng C.Y."/>
            <person name="Krishnakumar V."/>
            <person name="Chan A.P."/>
            <person name="Thibaud-Nissen F."/>
            <person name="Schobel S."/>
            <person name="Town C.D."/>
        </authorList>
    </citation>
    <scope>GENOME REANNOTATION</scope>
    <source>
        <strain>cv. Columbia</strain>
    </source>
</reference>
<reference key="3">
    <citation type="journal article" date="2001" name="Nucleic Acids Res.">
        <title>The Arabidopsis thaliana genome contains at least 29 active genes encoding SET domain proteins that can be assigned to four evolutionarily conserved classes.</title>
        <authorList>
            <person name="Baumbusch L.O."/>
            <person name="Thorstensen T."/>
            <person name="Krauss V."/>
            <person name="Fischer A."/>
            <person name="Naumann K."/>
            <person name="Assalkhou R."/>
            <person name="Schulz I."/>
            <person name="Reuter G."/>
            <person name="Aalen R.B."/>
        </authorList>
    </citation>
    <scope>NOMENCLATURE</scope>
</reference>
<evidence type="ECO:0000250" key="1"/>
<evidence type="ECO:0000255" key="2"/>
<evidence type="ECO:0000255" key="3">
    <source>
        <dbReference type="PROSITE-ProRule" id="PRU00190"/>
    </source>
</evidence>
<evidence type="ECO:0000305" key="4"/>